<sequence>MEMKQISETTLKITISMEDLEERGMELKDFLIPQEKTEEFFYTVMDELDLPENFKDSGMLSFRVTPRNDRIDVFVTKSEINKNLNLEDLSDFDDISKMSPEDFFNTLEETMREKGDAAALDKLAEIEKREEEKTQQEKGETKEKRDYVHFVLDFPNIQQVINFAKTVDYDVEASELFKESDAYHMTVLLNLEDKPDYYADLMFARMLEHAGRGTKTRAYLLEHGVQLIKADALQELQMIG</sequence>
<reference key="1">
    <citation type="journal article" date="1999" name="J. Bacteriol.">
        <title>A novel gene required for rhamnose-glucose polysaccharide synthesis in Streptococcus mutans.</title>
        <authorList>
            <person name="Yamashita Y."/>
            <person name="Shibata Y."/>
            <person name="Nakano Y."/>
            <person name="Tsuda H."/>
            <person name="Kido N."/>
            <person name="Ohta M."/>
            <person name="Koga T."/>
        </authorList>
    </citation>
    <scope>NUCLEOTIDE SEQUENCE [GENOMIC DNA]</scope>
    <source>
        <strain>Xc / Serotype c</strain>
    </source>
</reference>
<reference key="2">
    <citation type="journal article" date="2002" name="Proc. Natl. Acad. Sci. U.S.A.">
        <title>Genome sequence of Streptococcus mutans UA159, a cariogenic dental pathogen.</title>
        <authorList>
            <person name="Ajdic D.J."/>
            <person name="McShan W.M."/>
            <person name="McLaughlin R.E."/>
            <person name="Savic G."/>
            <person name="Chang J."/>
            <person name="Carson M.B."/>
            <person name="Primeaux C."/>
            <person name="Tian R."/>
            <person name="Kenton S."/>
            <person name="Jia H.G."/>
            <person name="Lin S.P."/>
            <person name="Qian Y."/>
            <person name="Li S."/>
            <person name="Zhu H."/>
            <person name="Najar F.Z."/>
            <person name="Lai H."/>
            <person name="White J."/>
            <person name="Roe B.A."/>
            <person name="Ferretti J.J."/>
        </authorList>
    </citation>
    <scope>NUCLEOTIDE SEQUENCE [LARGE SCALE GENOMIC DNA]</scope>
    <source>
        <strain>ATCC 700610 / UA159</strain>
    </source>
</reference>
<keyword id="KW-1185">Reference proteome</keyword>
<protein>
    <recommendedName>
        <fullName evidence="1">Adapter protein MecA</fullName>
    </recommendedName>
</protein>
<proteinExistence type="inferred from homology"/>
<dbReference type="EMBL" id="AB022909">
    <property type="protein sequence ID" value="BAA82113.1"/>
    <property type="molecule type" value="Genomic_DNA"/>
</dbReference>
<dbReference type="EMBL" id="AE014133">
    <property type="protein sequence ID" value="AAN58015.1"/>
    <property type="molecule type" value="Genomic_DNA"/>
</dbReference>
<dbReference type="RefSeq" id="NP_720709.1">
    <property type="nucleotide sequence ID" value="NC_004350.2"/>
</dbReference>
<dbReference type="RefSeq" id="WP_002262749.1">
    <property type="nucleotide sequence ID" value="NC_004350.2"/>
</dbReference>
<dbReference type="SMR" id="Q8DW33"/>
<dbReference type="STRING" id="210007.SMU_245"/>
<dbReference type="KEGG" id="smu:SMU_245"/>
<dbReference type="PATRIC" id="fig|210007.7.peg.212"/>
<dbReference type="eggNOG" id="COG4862">
    <property type="taxonomic scope" value="Bacteria"/>
</dbReference>
<dbReference type="HOGENOM" id="CLU_071496_1_0_9"/>
<dbReference type="OrthoDB" id="2360201at2"/>
<dbReference type="PhylomeDB" id="Q8DW33"/>
<dbReference type="Proteomes" id="UP000002512">
    <property type="component" value="Chromosome"/>
</dbReference>
<dbReference type="GO" id="GO:0030674">
    <property type="term" value="F:protein-macromolecule adaptor activity"/>
    <property type="evidence" value="ECO:0007669"/>
    <property type="project" value="UniProtKB-UniRule"/>
</dbReference>
<dbReference type="Gene3D" id="3.30.70.1950">
    <property type="match status" value="1"/>
</dbReference>
<dbReference type="HAMAP" id="MF_01124">
    <property type="entry name" value="MecA"/>
    <property type="match status" value="1"/>
</dbReference>
<dbReference type="InterPro" id="IPR038471">
    <property type="entry name" value="MecA_C_sf"/>
</dbReference>
<dbReference type="InterPro" id="IPR008681">
    <property type="entry name" value="Neg-reg_MecA"/>
</dbReference>
<dbReference type="NCBIfam" id="NF002643">
    <property type="entry name" value="PRK02315.1-4"/>
    <property type="match status" value="1"/>
</dbReference>
<dbReference type="PANTHER" id="PTHR39161">
    <property type="entry name" value="ADAPTER PROTEIN MECA"/>
    <property type="match status" value="1"/>
</dbReference>
<dbReference type="PANTHER" id="PTHR39161:SF1">
    <property type="entry name" value="ADAPTER PROTEIN MECA 1"/>
    <property type="match status" value="1"/>
</dbReference>
<dbReference type="Pfam" id="PF05389">
    <property type="entry name" value="MecA"/>
    <property type="match status" value="1"/>
</dbReference>
<dbReference type="PIRSF" id="PIRSF029008">
    <property type="entry name" value="MecA"/>
    <property type="match status" value="1"/>
</dbReference>
<gene>
    <name evidence="1" type="primary">mecA</name>
    <name type="ordered locus">SMU_245</name>
</gene>
<organism>
    <name type="scientific">Streptococcus mutans serotype c (strain ATCC 700610 / UA159)</name>
    <dbReference type="NCBI Taxonomy" id="210007"/>
    <lineage>
        <taxon>Bacteria</taxon>
        <taxon>Bacillati</taxon>
        <taxon>Bacillota</taxon>
        <taxon>Bacilli</taxon>
        <taxon>Lactobacillales</taxon>
        <taxon>Streptococcaceae</taxon>
        <taxon>Streptococcus</taxon>
    </lineage>
</organism>
<comment type="function">
    <text evidence="1">Enables the recognition and targeting of unfolded and aggregated proteins to the ClpC protease or to other proteins involved in proteolysis.</text>
</comment>
<comment type="subunit">
    <text evidence="1">Homodimer.</text>
</comment>
<comment type="domain">
    <text>The N-terminal domain probably binds unfolded/aggregated proteins; the C-terminal domain interacts with ClpC.</text>
</comment>
<comment type="similarity">
    <text evidence="1">Belongs to the MecA family.</text>
</comment>
<accession>Q8DW33</accession>
<accession>Q9XDW9</accession>
<feature type="chain" id="PRO_0000212288" description="Adapter protein MecA">
    <location>
        <begin position="1"/>
        <end position="240"/>
    </location>
</feature>
<feature type="sequence conflict" description="In Ref. 1; BAA82113." evidence="2" ref="1">
    <original>D</original>
    <variation>G</variation>
    <location>
        <position position="56"/>
    </location>
</feature>
<feature type="sequence conflict" description="In Ref. 1; BAA82113." evidence="2" ref="1">
    <original>N</original>
    <variation>S</variation>
    <location>
        <position position="162"/>
    </location>
</feature>
<evidence type="ECO:0000255" key="1">
    <source>
        <dbReference type="HAMAP-Rule" id="MF_01124"/>
    </source>
</evidence>
<evidence type="ECO:0000305" key="2"/>
<name>MECA_STRMU</name>